<protein>
    <recommendedName>
        <fullName>Tetratricopeptide repeat protein 39C</fullName>
        <shortName>TPR repeat protein 39C</shortName>
    </recommendedName>
</protein>
<evidence type="ECO:0000305" key="1"/>
<dbReference type="EMBL" id="AK013267">
    <property type="protein sequence ID" value="BAB28758.1"/>
    <property type="molecule type" value="mRNA"/>
</dbReference>
<dbReference type="EMBL" id="BC020021">
    <property type="protein sequence ID" value="AAH20021.1"/>
    <property type="molecule type" value="mRNA"/>
</dbReference>
<dbReference type="CCDS" id="CCDS29065.1"/>
<dbReference type="RefSeq" id="NP_082617.2">
    <property type="nucleotide sequence ID" value="NM_028341.4"/>
</dbReference>
<dbReference type="SMR" id="Q8VE09"/>
<dbReference type="BioGRID" id="215545">
    <property type="interactions" value="2"/>
</dbReference>
<dbReference type="FunCoup" id="Q8VE09">
    <property type="interactions" value="3"/>
</dbReference>
<dbReference type="IntAct" id="Q8VE09">
    <property type="interactions" value="3"/>
</dbReference>
<dbReference type="STRING" id="10090.ENSMUSP00000157144"/>
<dbReference type="iPTMnet" id="Q8VE09"/>
<dbReference type="PhosphoSitePlus" id="Q8VE09"/>
<dbReference type="SwissPalm" id="Q8VE09"/>
<dbReference type="jPOST" id="Q8VE09"/>
<dbReference type="PaxDb" id="10090-ENSMUSP00000025294"/>
<dbReference type="ProteomicsDB" id="297738"/>
<dbReference type="Pumba" id="Q8VE09"/>
<dbReference type="DNASU" id="72747"/>
<dbReference type="GeneID" id="72747"/>
<dbReference type="KEGG" id="mmu:72747"/>
<dbReference type="AGR" id="MGI:1919997"/>
<dbReference type="CTD" id="125488"/>
<dbReference type="MGI" id="MGI:1919997">
    <property type="gene designation" value="Ttc39c"/>
</dbReference>
<dbReference type="eggNOG" id="KOG3783">
    <property type="taxonomic scope" value="Eukaryota"/>
</dbReference>
<dbReference type="InParanoid" id="Q8VE09"/>
<dbReference type="OrthoDB" id="2154985at2759"/>
<dbReference type="PhylomeDB" id="Q8VE09"/>
<dbReference type="BioGRID-ORCS" id="72747">
    <property type="hits" value="1 hit in 76 CRISPR screens"/>
</dbReference>
<dbReference type="ChiTaRS" id="Ttc39c">
    <property type="organism name" value="mouse"/>
</dbReference>
<dbReference type="PRO" id="PR:Q8VE09"/>
<dbReference type="Proteomes" id="UP000000589">
    <property type="component" value="Unplaced"/>
</dbReference>
<dbReference type="RNAct" id="Q8VE09">
    <property type="molecule type" value="protein"/>
</dbReference>
<dbReference type="Gene3D" id="1.25.40.10">
    <property type="entry name" value="Tetratricopeptide repeat domain"/>
    <property type="match status" value="1"/>
</dbReference>
<dbReference type="InterPro" id="IPR019412">
    <property type="entry name" value="Iml2/TPR_39"/>
</dbReference>
<dbReference type="InterPro" id="IPR011990">
    <property type="entry name" value="TPR-like_helical_dom_sf"/>
</dbReference>
<dbReference type="PANTHER" id="PTHR31859">
    <property type="entry name" value="TETRATRICOPEPTIDE REPEAT PROTEIN 39 FAMILY MEMBER"/>
    <property type="match status" value="1"/>
</dbReference>
<dbReference type="PANTHER" id="PTHR31859:SF1">
    <property type="entry name" value="TETRATRICOPEPTIDE REPEAT PROTEIN 39C"/>
    <property type="match status" value="1"/>
</dbReference>
<dbReference type="Pfam" id="PF10300">
    <property type="entry name" value="Iml2-TPR_39"/>
    <property type="match status" value="1"/>
</dbReference>
<dbReference type="SUPFAM" id="SSF48452">
    <property type="entry name" value="TPR-like"/>
    <property type="match status" value="1"/>
</dbReference>
<gene>
    <name type="primary">Ttc39c</name>
</gene>
<comment type="similarity">
    <text evidence="1">Belongs to the TTC39 family.</text>
</comment>
<organism>
    <name type="scientific">Mus musculus</name>
    <name type="common">Mouse</name>
    <dbReference type="NCBI Taxonomy" id="10090"/>
    <lineage>
        <taxon>Eukaryota</taxon>
        <taxon>Metazoa</taxon>
        <taxon>Chordata</taxon>
        <taxon>Craniata</taxon>
        <taxon>Vertebrata</taxon>
        <taxon>Euteleostomi</taxon>
        <taxon>Mammalia</taxon>
        <taxon>Eutheria</taxon>
        <taxon>Euarchontoglires</taxon>
        <taxon>Glires</taxon>
        <taxon>Rodentia</taxon>
        <taxon>Myomorpha</taxon>
        <taxon>Muroidea</taxon>
        <taxon>Muridae</taxon>
        <taxon>Murinae</taxon>
        <taxon>Mus</taxon>
        <taxon>Mus</taxon>
    </lineage>
</organism>
<proteinExistence type="evidence at protein level"/>
<feature type="chain" id="PRO_0000274353" description="Tetratricopeptide repeat protein 39C">
    <location>
        <begin position="1"/>
        <end position="580"/>
    </location>
</feature>
<feature type="repeat" description="TPR 1">
    <location>
        <begin position="312"/>
        <end position="345"/>
    </location>
</feature>
<feature type="repeat" description="TPR 2">
    <location>
        <begin position="350"/>
        <end position="383"/>
    </location>
</feature>
<feature type="repeat" description="TPR 3">
    <location>
        <begin position="482"/>
        <end position="515"/>
    </location>
</feature>
<feature type="sequence conflict" description="In Ref. 1; BAB28758." evidence="1" ref="1">
    <original>EL</original>
    <variation>DV</variation>
    <location>
        <begin position="28"/>
        <end position="29"/>
    </location>
</feature>
<feature type="sequence conflict" description="In Ref. 1; BAB28758." evidence="1" ref="1">
    <original>F</original>
    <variation>L</variation>
    <location>
        <position position="408"/>
    </location>
</feature>
<feature type="sequence conflict" description="In Ref. 2; AAH20021." evidence="1" ref="2">
    <original>C</original>
    <variation>S</variation>
    <location>
        <position position="526"/>
    </location>
</feature>
<sequence length="580" mass="65445">MAGSEEQWPRRREDGDPDAAAAPLQDAELALAGINMLLNNGFRESDQLFKQYRNHSPLMSFGASFVSFLNAMMTFEEEKMQLACDDLKTTEKLCESEEAGVIETIKNKIKKNVDARKSTPSMVDRLQRQIIIADCQVYLAVLSFVKQELSAYIKGGWILRKAWKIYSKCYVDINALQELYQKKLTEEPLASDAANDNHVVAEGVTEESLSRLKGAVSFGYGLFHLCISMVPPNLLKIINLLGFPGDRLQGLSSLTYASESKDMKAPLATLALLWYHTVVRPFFALDGSDNKGGLDEAKAILLRKESAYPNSSLFMFFKGRIQRLECQINSALTSFHTALELAVDQREIQHVCLYEIGWCSMIELNFKDAFDSFERLKNESRWSQCYYAYLTAVCQGATGDVDGAQLVFKEVQKLFKRKNNQIEQFSVKKAERFRKQTPTRALCVLASIEVLYLWKALPNCSFPNLQRMSQACHEVDDSSVVGLKHLLLGAIHKCLGNSQDALQFFQRAARDELCRQSNSYVPPYACYELGCLLLDSAETVGRGRTLLLQAKEDFSGYDFENRLHVRIHAALASLRELVPQ</sequence>
<keyword id="KW-1185">Reference proteome</keyword>
<keyword id="KW-0677">Repeat</keyword>
<keyword id="KW-0802">TPR repeat</keyword>
<name>TT39C_MOUSE</name>
<accession>Q8VE09</accession>
<accession>Q9CYV6</accession>
<reference key="1">
    <citation type="journal article" date="2005" name="Science">
        <title>The transcriptional landscape of the mammalian genome.</title>
        <authorList>
            <person name="Carninci P."/>
            <person name="Kasukawa T."/>
            <person name="Katayama S."/>
            <person name="Gough J."/>
            <person name="Frith M.C."/>
            <person name="Maeda N."/>
            <person name="Oyama R."/>
            <person name="Ravasi T."/>
            <person name="Lenhard B."/>
            <person name="Wells C."/>
            <person name="Kodzius R."/>
            <person name="Shimokawa K."/>
            <person name="Bajic V.B."/>
            <person name="Brenner S.E."/>
            <person name="Batalov S."/>
            <person name="Forrest A.R."/>
            <person name="Zavolan M."/>
            <person name="Davis M.J."/>
            <person name="Wilming L.G."/>
            <person name="Aidinis V."/>
            <person name="Allen J.E."/>
            <person name="Ambesi-Impiombato A."/>
            <person name="Apweiler R."/>
            <person name="Aturaliya R.N."/>
            <person name="Bailey T.L."/>
            <person name="Bansal M."/>
            <person name="Baxter L."/>
            <person name="Beisel K.W."/>
            <person name="Bersano T."/>
            <person name="Bono H."/>
            <person name="Chalk A.M."/>
            <person name="Chiu K.P."/>
            <person name="Choudhary V."/>
            <person name="Christoffels A."/>
            <person name="Clutterbuck D.R."/>
            <person name="Crowe M.L."/>
            <person name="Dalla E."/>
            <person name="Dalrymple B.P."/>
            <person name="de Bono B."/>
            <person name="Della Gatta G."/>
            <person name="di Bernardo D."/>
            <person name="Down T."/>
            <person name="Engstrom P."/>
            <person name="Fagiolini M."/>
            <person name="Faulkner G."/>
            <person name="Fletcher C.F."/>
            <person name="Fukushima T."/>
            <person name="Furuno M."/>
            <person name="Futaki S."/>
            <person name="Gariboldi M."/>
            <person name="Georgii-Hemming P."/>
            <person name="Gingeras T.R."/>
            <person name="Gojobori T."/>
            <person name="Green R.E."/>
            <person name="Gustincich S."/>
            <person name="Harbers M."/>
            <person name="Hayashi Y."/>
            <person name="Hensch T.K."/>
            <person name="Hirokawa N."/>
            <person name="Hill D."/>
            <person name="Huminiecki L."/>
            <person name="Iacono M."/>
            <person name="Ikeo K."/>
            <person name="Iwama A."/>
            <person name="Ishikawa T."/>
            <person name="Jakt M."/>
            <person name="Kanapin A."/>
            <person name="Katoh M."/>
            <person name="Kawasawa Y."/>
            <person name="Kelso J."/>
            <person name="Kitamura H."/>
            <person name="Kitano H."/>
            <person name="Kollias G."/>
            <person name="Krishnan S.P."/>
            <person name="Kruger A."/>
            <person name="Kummerfeld S.K."/>
            <person name="Kurochkin I.V."/>
            <person name="Lareau L.F."/>
            <person name="Lazarevic D."/>
            <person name="Lipovich L."/>
            <person name="Liu J."/>
            <person name="Liuni S."/>
            <person name="McWilliam S."/>
            <person name="Madan Babu M."/>
            <person name="Madera M."/>
            <person name="Marchionni L."/>
            <person name="Matsuda H."/>
            <person name="Matsuzawa S."/>
            <person name="Miki H."/>
            <person name="Mignone F."/>
            <person name="Miyake S."/>
            <person name="Morris K."/>
            <person name="Mottagui-Tabar S."/>
            <person name="Mulder N."/>
            <person name="Nakano N."/>
            <person name="Nakauchi H."/>
            <person name="Ng P."/>
            <person name="Nilsson R."/>
            <person name="Nishiguchi S."/>
            <person name="Nishikawa S."/>
            <person name="Nori F."/>
            <person name="Ohara O."/>
            <person name="Okazaki Y."/>
            <person name="Orlando V."/>
            <person name="Pang K.C."/>
            <person name="Pavan W.J."/>
            <person name="Pavesi G."/>
            <person name="Pesole G."/>
            <person name="Petrovsky N."/>
            <person name="Piazza S."/>
            <person name="Reed J."/>
            <person name="Reid J.F."/>
            <person name="Ring B.Z."/>
            <person name="Ringwald M."/>
            <person name="Rost B."/>
            <person name="Ruan Y."/>
            <person name="Salzberg S.L."/>
            <person name="Sandelin A."/>
            <person name="Schneider C."/>
            <person name="Schoenbach C."/>
            <person name="Sekiguchi K."/>
            <person name="Semple C.A."/>
            <person name="Seno S."/>
            <person name="Sessa L."/>
            <person name="Sheng Y."/>
            <person name="Shibata Y."/>
            <person name="Shimada H."/>
            <person name="Shimada K."/>
            <person name="Silva D."/>
            <person name="Sinclair B."/>
            <person name="Sperling S."/>
            <person name="Stupka E."/>
            <person name="Sugiura K."/>
            <person name="Sultana R."/>
            <person name="Takenaka Y."/>
            <person name="Taki K."/>
            <person name="Tammoja K."/>
            <person name="Tan S.L."/>
            <person name="Tang S."/>
            <person name="Taylor M.S."/>
            <person name="Tegner J."/>
            <person name="Teichmann S.A."/>
            <person name="Ueda H.R."/>
            <person name="van Nimwegen E."/>
            <person name="Verardo R."/>
            <person name="Wei C.L."/>
            <person name="Yagi K."/>
            <person name="Yamanishi H."/>
            <person name="Zabarovsky E."/>
            <person name="Zhu S."/>
            <person name="Zimmer A."/>
            <person name="Hide W."/>
            <person name="Bult C."/>
            <person name="Grimmond S.M."/>
            <person name="Teasdale R.D."/>
            <person name="Liu E.T."/>
            <person name="Brusic V."/>
            <person name="Quackenbush J."/>
            <person name="Wahlestedt C."/>
            <person name="Mattick J.S."/>
            <person name="Hume D.A."/>
            <person name="Kai C."/>
            <person name="Sasaki D."/>
            <person name="Tomaru Y."/>
            <person name="Fukuda S."/>
            <person name="Kanamori-Katayama M."/>
            <person name="Suzuki M."/>
            <person name="Aoki J."/>
            <person name="Arakawa T."/>
            <person name="Iida J."/>
            <person name="Imamura K."/>
            <person name="Itoh M."/>
            <person name="Kato T."/>
            <person name="Kawaji H."/>
            <person name="Kawagashira N."/>
            <person name="Kawashima T."/>
            <person name="Kojima M."/>
            <person name="Kondo S."/>
            <person name="Konno H."/>
            <person name="Nakano K."/>
            <person name="Ninomiya N."/>
            <person name="Nishio T."/>
            <person name="Okada M."/>
            <person name="Plessy C."/>
            <person name="Shibata K."/>
            <person name="Shiraki T."/>
            <person name="Suzuki S."/>
            <person name="Tagami M."/>
            <person name="Waki K."/>
            <person name="Watahiki A."/>
            <person name="Okamura-Oho Y."/>
            <person name="Suzuki H."/>
            <person name="Kawai J."/>
            <person name="Hayashizaki Y."/>
        </authorList>
    </citation>
    <scope>NUCLEOTIDE SEQUENCE [LARGE SCALE MRNA]</scope>
    <source>
        <strain>C57BL/6J</strain>
        <tissue>Embryo</tissue>
    </source>
</reference>
<reference key="2">
    <citation type="journal article" date="2004" name="Genome Res.">
        <title>The status, quality, and expansion of the NIH full-length cDNA project: the Mammalian Gene Collection (MGC).</title>
        <authorList>
            <consortium name="The MGC Project Team"/>
        </authorList>
    </citation>
    <scope>NUCLEOTIDE SEQUENCE [LARGE SCALE MRNA]</scope>
    <source>
        <strain>129</strain>
        <tissue>Mammary tumor</tissue>
    </source>
</reference>
<reference key="3">
    <citation type="journal article" date="2010" name="Cell">
        <title>A tissue-specific atlas of mouse protein phosphorylation and expression.</title>
        <authorList>
            <person name="Huttlin E.L."/>
            <person name="Jedrychowski M.P."/>
            <person name="Elias J.E."/>
            <person name="Goswami T."/>
            <person name="Rad R."/>
            <person name="Beausoleil S.A."/>
            <person name="Villen J."/>
            <person name="Haas W."/>
            <person name="Sowa M.E."/>
            <person name="Gygi S.P."/>
        </authorList>
    </citation>
    <scope>IDENTIFICATION BY MASS SPECTROMETRY [LARGE SCALE ANALYSIS]</scope>
    <source>
        <tissue>Brain</tissue>
        <tissue>Liver</tissue>
        <tissue>Testis</tissue>
    </source>
</reference>